<gene>
    <name evidence="1" type="primary">glk</name>
    <name type="ordered locus">CKO_00412</name>
</gene>
<reference key="1">
    <citation type="submission" date="2007-08" db="EMBL/GenBank/DDBJ databases">
        <authorList>
            <consortium name="The Citrobacter koseri Genome Sequencing Project"/>
            <person name="McClelland M."/>
            <person name="Sanderson E.K."/>
            <person name="Porwollik S."/>
            <person name="Spieth J."/>
            <person name="Clifton W.S."/>
            <person name="Latreille P."/>
            <person name="Courtney L."/>
            <person name="Wang C."/>
            <person name="Pepin K."/>
            <person name="Bhonagiri V."/>
            <person name="Nash W."/>
            <person name="Johnson M."/>
            <person name="Thiruvilangam P."/>
            <person name="Wilson R."/>
        </authorList>
    </citation>
    <scope>NUCLEOTIDE SEQUENCE [LARGE SCALE GENOMIC DNA]</scope>
    <source>
        <strain>ATCC BAA-895 / CDC 4225-83 / SGSC4696</strain>
    </source>
</reference>
<keyword id="KW-0067">ATP-binding</keyword>
<keyword id="KW-0963">Cytoplasm</keyword>
<keyword id="KW-0324">Glycolysis</keyword>
<keyword id="KW-0418">Kinase</keyword>
<keyword id="KW-0547">Nucleotide-binding</keyword>
<keyword id="KW-1185">Reference proteome</keyword>
<keyword id="KW-0808">Transferase</keyword>
<dbReference type="EC" id="2.7.1.2" evidence="1"/>
<dbReference type="EMBL" id="CP000822">
    <property type="protein sequence ID" value="ABV11569.1"/>
    <property type="molecule type" value="Genomic_DNA"/>
</dbReference>
<dbReference type="RefSeq" id="WP_012131396.1">
    <property type="nucleotide sequence ID" value="NC_009792.1"/>
</dbReference>
<dbReference type="SMR" id="A8ADK6"/>
<dbReference type="STRING" id="290338.CKO_00412"/>
<dbReference type="GeneID" id="45134670"/>
<dbReference type="KEGG" id="cko:CKO_00412"/>
<dbReference type="HOGENOM" id="CLU_042582_1_0_6"/>
<dbReference type="OrthoDB" id="9800595at2"/>
<dbReference type="Proteomes" id="UP000008148">
    <property type="component" value="Chromosome"/>
</dbReference>
<dbReference type="GO" id="GO:0005829">
    <property type="term" value="C:cytosol"/>
    <property type="evidence" value="ECO:0007669"/>
    <property type="project" value="TreeGrafter"/>
</dbReference>
<dbReference type="GO" id="GO:0005524">
    <property type="term" value="F:ATP binding"/>
    <property type="evidence" value="ECO:0007669"/>
    <property type="project" value="UniProtKB-UniRule"/>
</dbReference>
<dbReference type="GO" id="GO:0005536">
    <property type="term" value="F:D-glucose binding"/>
    <property type="evidence" value="ECO:0007669"/>
    <property type="project" value="InterPro"/>
</dbReference>
<dbReference type="GO" id="GO:0004340">
    <property type="term" value="F:glucokinase activity"/>
    <property type="evidence" value="ECO:0007669"/>
    <property type="project" value="UniProtKB-UniRule"/>
</dbReference>
<dbReference type="GO" id="GO:0006096">
    <property type="term" value="P:glycolytic process"/>
    <property type="evidence" value="ECO:0007669"/>
    <property type="project" value="UniProtKB-UniRule"/>
</dbReference>
<dbReference type="CDD" id="cd24008">
    <property type="entry name" value="ASKHA_NBD_GLK"/>
    <property type="match status" value="1"/>
</dbReference>
<dbReference type="FunFam" id="3.30.420.40:FF:000045">
    <property type="entry name" value="Glucokinase"/>
    <property type="match status" value="1"/>
</dbReference>
<dbReference type="FunFam" id="3.40.367.20:FF:000002">
    <property type="entry name" value="Glucokinase"/>
    <property type="match status" value="1"/>
</dbReference>
<dbReference type="Gene3D" id="3.30.420.40">
    <property type="match status" value="1"/>
</dbReference>
<dbReference type="Gene3D" id="3.40.367.20">
    <property type="match status" value="1"/>
</dbReference>
<dbReference type="HAMAP" id="MF_00524">
    <property type="entry name" value="Glucokinase"/>
    <property type="match status" value="1"/>
</dbReference>
<dbReference type="InterPro" id="IPR043129">
    <property type="entry name" value="ATPase_NBD"/>
</dbReference>
<dbReference type="InterPro" id="IPR050201">
    <property type="entry name" value="Bacterial_glucokinase"/>
</dbReference>
<dbReference type="InterPro" id="IPR003836">
    <property type="entry name" value="Glucokinase"/>
</dbReference>
<dbReference type="NCBIfam" id="TIGR00749">
    <property type="entry name" value="glk"/>
    <property type="match status" value="1"/>
</dbReference>
<dbReference type="NCBIfam" id="NF001414">
    <property type="entry name" value="PRK00292.1-1"/>
    <property type="match status" value="1"/>
</dbReference>
<dbReference type="NCBIfam" id="NF001416">
    <property type="entry name" value="PRK00292.1-3"/>
    <property type="match status" value="1"/>
</dbReference>
<dbReference type="NCBIfam" id="NF009073">
    <property type="entry name" value="PRK12408.1"/>
    <property type="match status" value="1"/>
</dbReference>
<dbReference type="PANTHER" id="PTHR47690">
    <property type="entry name" value="GLUCOKINASE"/>
    <property type="match status" value="1"/>
</dbReference>
<dbReference type="PANTHER" id="PTHR47690:SF1">
    <property type="entry name" value="GLUCOKINASE"/>
    <property type="match status" value="1"/>
</dbReference>
<dbReference type="Pfam" id="PF02685">
    <property type="entry name" value="Glucokinase"/>
    <property type="match status" value="1"/>
</dbReference>
<dbReference type="SUPFAM" id="SSF53067">
    <property type="entry name" value="Actin-like ATPase domain"/>
    <property type="match status" value="1"/>
</dbReference>
<protein>
    <recommendedName>
        <fullName evidence="1">Glucokinase</fullName>
        <ecNumber evidence="1">2.7.1.2</ecNumber>
    </recommendedName>
    <alternativeName>
        <fullName evidence="1">Glucose kinase</fullName>
    </alternativeName>
</protein>
<comment type="catalytic activity">
    <reaction evidence="1">
        <text>D-glucose + ATP = D-glucose 6-phosphate + ADP + H(+)</text>
        <dbReference type="Rhea" id="RHEA:17825"/>
        <dbReference type="ChEBI" id="CHEBI:4167"/>
        <dbReference type="ChEBI" id="CHEBI:15378"/>
        <dbReference type="ChEBI" id="CHEBI:30616"/>
        <dbReference type="ChEBI" id="CHEBI:61548"/>
        <dbReference type="ChEBI" id="CHEBI:456216"/>
        <dbReference type="EC" id="2.7.1.2"/>
    </reaction>
</comment>
<comment type="subcellular location">
    <subcellularLocation>
        <location evidence="1">Cytoplasm</location>
    </subcellularLocation>
</comment>
<comment type="similarity">
    <text evidence="1">Belongs to the bacterial glucokinase family.</text>
</comment>
<organism>
    <name type="scientific">Citrobacter koseri (strain ATCC BAA-895 / CDC 4225-83 / SGSC4696)</name>
    <dbReference type="NCBI Taxonomy" id="290338"/>
    <lineage>
        <taxon>Bacteria</taxon>
        <taxon>Pseudomonadati</taxon>
        <taxon>Pseudomonadota</taxon>
        <taxon>Gammaproteobacteria</taxon>
        <taxon>Enterobacterales</taxon>
        <taxon>Enterobacteriaceae</taxon>
        <taxon>Citrobacter</taxon>
    </lineage>
</organism>
<accession>A8ADK6</accession>
<feature type="chain" id="PRO_1000050966" description="Glucokinase">
    <location>
        <begin position="1"/>
        <end position="321"/>
    </location>
</feature>
<feature type="binding site" evidence="1">
    <location>
        <begin position="8"/>
        <end position="13"/>
    </location>
    <ligand>
        <name>ATP</name>
        <dbReference type="ChEBI" id="CHEBI:30616"/>
    </ligand>
</feature>
<proteinExistence type="inferred from homology"/>
<evidence type="ECO:0000255" key="1">
    <source>
        <dbReference type="HAMAP-Rule" id="MF_00524"/>
    </source>
</evidence>
<sequence length="321" mass="34583">MTKYALVGDVGGTNARLALCDMTSGEISQAKTYSGLDYPSLEAVVRVYLDEHNARVEDGCIAIACPITGDWVAMTNHTWAFSIAEMKKNLGFSHLEIINDFTAVSMAIPMLRKEHLIQFGGAEPVAGKPIAVYGAGTGLGVAHLVHVDKRWISLPGEGGHVDFAPNSEEEGIILEELRAEIGHVSAERVLSGPGLVNLYRAIVKSDGRLPENLQPKDITERALADTCIDSRRALSLFCVIMGRFGGNLALTLGTFGGVYIAGGIVPRFLEFFKASGFRGGFEDKGRFKAYVQDIPVYLIVHDNPGLLGSGAHLRQTLGQIL</sequence>
<name>GLK_CITK8</name>